<organism>
    <name type="scientific">Mycoplasma pneumoniae (strain ATCC 29342 / M129 / Subtype 1)</name>
    <name type="common">Mycoplasmoides pneumoniae</name>
    <dbReference type="NCBI Taxonomy" id="272634"/>
    <lineage>
        <taxon>Bacteria</taxon>
        <taxon>Bacillati</taxon>
        <taxon>Mycoplasmatota</taxon>
        <taxon>Mycoplasmoidales</taxon>
        <taxon>Mycoplasmoidaceae</taxon>
        <taxon>Mycoplasmoides</taxon>
    </lineage>
</organism>
<dbReference type="EC" id="5.6.2.3" evidence="1"/>
<dbReference type="EMBL" id="U00089">
    <property type="protein sequence ID" value="AAB96247.1"/>
    <property type="molecule type" value="Genomic_DNA"/>
</dbReference>
<dbReference type="PIR" id="S73925">
    <property type="entry name" value="S73925"/>
</dbReference>
<dbReference type="RefSeq" id="NP_109920.1">
    <property type="nucleotide sequence ID" value="NC_000912.1"/>
</dbReference>
<dbReference type="RefSeq" id="WP_010874589.1">
    <property type="nucleotide sequence ID" value="NC_000912.1"/>
</dbReference>
<dbReference type="SMR" id="P75539"/>
<dbReference type="IntAct" id="P75539">
    <property type="interactions" value="2"/>
</dbReference>
<dbReference type="STRING" id="272634.MPN_232"/>
<dbReference type="EnsemblBacteria" id="AAB96247">
    <property type="protein sequence ID" value="AAB96247"/>
    <property type="gene ID" value="MPN_232"/>
</dbReference>
<dbReference type="KEGG" id="mpn:MPN_232"/>
<dbReference type="PATRIC" id="fig|272634.6.peg.251"/>
<dbReference type="HOGENOM" id="CLU_005373_0_0_14"/>
<dbReference type="OrthoDB" id="9773982at2"/>
<dbReference type="BioCyc" id="MPNE272634:G1GJ3-370-MONOMER"/>
<dbReference type="Proteomes" id="UP000000808">
    <property type="component" value="Chromosome"/>
</dbReference>
<dbReference type="GO" id="GO:0005829">
    <property type="term" value="C:cytosol"/>
    <property type="evidence" value="ECO:0007669"/>
    <property type="project" value="TreeGrafter"/>
</dbReference>
<dbReference type="GO" id="GO:1990077">
    <property type="term" value="C:primosome complex"/>
    <property type="evidence" value="ECO:0007669"/>
    <property type="project" value="UniProtKB-KW"/>
</dbReference>
<dbReference type="GO" id="GO:0005524">
    <property type="term" value="F:ATP binding"/>
    <property type="evidence" value="ECO:0007669"/>
    <property type="project" value="UniProtKB-KW"/>
</dbReference>
<dbReference type="GO" id="GO:0016887">
    <property type="term" value="F:ATP hydrolysis activity"/>
    <property type="evidence" value="ECO:0007669"/>
    <property type="project" value="RHEA"/>
</dbReference>
<dbReference type="GO" id="GO:0003677">
    <property type="term" value="F:DNA binding"/>
    <property type="evidence" value="ECO:0007669"/>
    <property type="project" value="UniProtKB-KW"/>
</dbReference>
<dbReference type="GO" id="GO:0003678">
    <property type="term" value="F:DNA helicase activity"/>
    <property type="evidence" value="ECO:0007669"/>
    <property type="project" value="InterPro"/>
</dbReference>
<dbReference type="GO" id="GO:0006269">
    <property type="term" value="P:DNA replication, synthesis of primer"/>
    <property type="evidence" value="ECO:0007669"/>
    <property type="project" value="UniProtKB-KW"/>
</dbReference>
<dbReference type="CDD" id="cd00984">
    <property type="entry name" value="DnaB_C"/>
    <property type="match status" value="1"/>
</dbReference>
<dbReference type="Gene3D" id="1.10.860.10">
    <property type="entry name" value="DNAb Helicase, Chain A"/>
    <property type="match status" value="1"/>
</dbReference>
<dbReference type="Gene3D" id="3.40.50.300">
    <property type="entry name" value="P-loop containing nucleotide triphosphate hydrolases"/>
    <property type="match status" value="1"/>
</dbReference>
<dbReference type="InterPro" id="IPR007694">
    <property type="entry name" value="DNA_helicase_DnaB-like_C"/>
</dbReference>
<dbReference type="InterPro" id="IPR016136">
    <property type="entry name" value="DNA_helicase_N/primase_C"/>
</dbReference>
<dbReference type="InterPro" id="IPR027417">
    <property type="entry name" value="P-loop_NTPase"/>
</dbReference>
<dbReference type="PANTHER" id="PTHR30153:SF2">
    <property type="entry name" value="REPLICATIVE DNA HELICASE"/>
    <property type="match status" value="1"/>
</dbReference>
<dbReference type="PANTHER" id="PTHR30153">
    <property type="entry name" value="REPLICATIVE DNA HELICASE DNAB"/>
    <property type="match status" value="1"/>
</dbReference>
<dbReference type="Pfam" id="PF03796">
    <property type="entry name" value="DnaB_C"/>
    <property type="match status" value="1"/>
</dbReference>
<dbReference type="SUPFAM" id="SSF52540">
    <property type="entry name" value="P-loop containing nucleoside triphosphate hydrolases"/>
    <property type="match status" value="1"/>
</dbReference>
<dbReference type="PROSITE" id="PS51199">
    <property type="entry name" value="SF4_HELICASE"/>
    <property type="match status" value="1"/>
</dbReference>
<gene>
    <name type="primary">dnaB</name>
    <name type="ordered locus">MPN_232</name>
    <name type="ORF">MP599</name>
</gene>
<protein>
    <recommendedName>
        <fullName>Replicative DNA helicase DnaB</fullName>
        <ecNumber evidence="1">5.6.2.3</ecNumber>
    </recommendedName>
    <alternativeName>
        <fullName evidence="3">DNA 5'-3' helicase DnaB</fullName>
    </alternativeName>
</protein>
<comment type="function">
    <text evidence="1">The main replicative DNA helicase, it participates in initiation and elongation during chromosome replication. Travels ahead of the DNA replisome, separating dsDNA into templates for DNA synthesis. A processive ATP-dependent 5'-3' DNA helicase it has DNA-dependent ATPase activity.</text>
</comment>
<comment type="catalytic activity">
    <reaction evidence="1">
        <text>Couples ATP hydrolysis with the unwinding of duplex DNA at the replication fork by translocating in the 5'-3' direction. This creates two antiparallel DNA single strands (ssDNA). The leading ssDNA polymer is the template for DNA polymerase III holoenzyme which synthesizes a continuous strand.</text>
        <dbReference type="EC" id="5.6.2.3"/>
    </reaction>
</comment>
<comment type="catalytic activity">
    <reaction evidence="1">
        <text>ATP + H2O = ADP + phosphate + H(+)</text>
        <dbReference type="Rhea" id="RHEA:13065"/>
        <dbReference type="ChEBI" id="CHEBI:15377"/>
        <dbReference type="ChEBI" id="CHEBI:15378"/>
        <dbReference type="ChEBI" id="CHEBI:30616"/>
        <dbReference type="ChEBI" id="CHEBI:43474"/>
        <dbReference type="ChEBI" id="CHEBI:456216"/>
        <dbReference type="EC" id="5.6.2.3"/>
    </reaction>
</comment>
<comment type="subunit">
    <text evidence="1">Homohexamer.</text>
</comment>
<comment type="similarity">
    <text evidence="3">Belongs to the helicase family. DnaB subfamily.</text>
</comment>
<reference key="1">
    <citation type="journal article" date="1996" name="Nucleic Acids Res.">
        <title>Complete sequence analysis of the genome of the bacterium Mycoplasma pneumoniae.</title>
        <authorList>
            <person name="Himmelreich R."/>
            <person name="Hilbert H."/>
            <person name="Plagens H."/>
            <person name="Pirkl E."/>
            <person name="Li B.-C."/>
            <person name="Herrmann R."/>
        </authorList>
    </citation>
    <scope>NUCLEOTIDE SEQUENCE [LARGE SCALE GENOMIC DNA]</scope>
    <source>
        <strain>ATCC 29342 / M129 / Subtype 1</strain>
    </source>
</reference>
<feature type="chain" id="PRO_0000102026" description="Replicative DNA helicase DnaB">
    <location>
        <begin position="1"/>
        <end position="473"/>
    </location>
</feature>
<feature type="domain" description="SF4 helicase" evidence="2">
    <location>
        <begin position="191"/>
        <end position="469"/>
    </location>
</feature>
<feature type="binding site" evidence="2">
    <location>
        <begin position="222"/>
        <end position="229"/>
    </location>
    <ligand>
        <name>ATP</name>
        <dbReference type="ChEBI" id="CHEBI:30616"/>
    </ligand>
</feature>
<keyword id="KW-0067">ATP-binding</keyword>
<keyword id="KW-0235">DNA replication</keyword>
<keyword id="KW-0238">DNA-binding</keyword>
<keyword id="KW-0347">Helicase</keyword>
<keyword id="KW-0378">Hydrolase</keyword>
<keyword id="KW-0413">Isomerase</keyword>
<keyword id="KW-0547">Nucleotide-binding</keyword>
<keyword id="KW-0639">Primosome</keyword>
<keyword id="KW-1185">Reference proteome</keyword>
<accession>P75539</accession>
<evidence type="ECO:0000250" key="1">
    <source>
        <dbReference type="UniProtKB" id="P0ACB0"/>
    </source>
</evidence>
<evidence type="ECO:0000255" key="2">
    <source>
        <dbReference type="PROSITE-ProRule" id="PRU00596"/>
    </source>
</evidence>
<evidence type="ECO:0000305" key="3"/>
<sequence>MVSNKLEQTFKFANDKNIERAERVLMQALVQDAVGVDLILTKLEPKDFFGFPFNFIFQTAQENYSEGNKLFGSALLEAVKFKLDTDSKTQREIEGLFEDVLLKGLPFLERDIKVFVDVVKKASIFRQLKQFAKKVEKEEFKVKDDRFEGYLQAIQNDFTKIIHSAFVSIPGLSYDEIVREEEELIPKVYRGELTVKGLKSGFYPLDQLTSGWKEGELIVVAARPGRGKTALLINFLQGAVNDSEKFDKNKDVLLFFSLEMRNREIYQRHLMLESQVNYTLTSRQRLANVYDDLIKASEVLRDLPIKIFDYSTITLDEIRAQITEVSKTNNVKLVVIDYLQLVNAFKNSYNISRQQEVTMISKSLKSFAKEFNVPIIAAAQLSRRIEERKDSRPILSDLRESGSIEQDADMVLFIHRVKDEDSENQEAIGHNNIFQVELILEKNRSGPTGKVQFDFQSDVSTFRVREYNPDGYS</sequence>
<proteinExistence type="inferred from homology"/>
<name>DNAB_MYCPN</name>